<accession>B1KQE6</accession>
<evidence type="ECO:0000255" key="1">
    <source>
        <dbReference type="HAMAP-Rule" id="MF_00166"/>
    </source>
</evidence>
<feature type="chain" id="PRO_1000097465" description="DNA-binding protein Fis">
    <location>
        <begin position="1"/>
        <end position="101"/>
    </location>
</feature>
<feature type="DNA-binding region" description="H-T-H motif" evidence="1">
    <location>
        <begin position="77"/>
        <end position="96"/>
    </location>
</feature>
<dbReference type="EMBL" id="CP000961">
    <property type="protein sequence ID" value="ACA84801.1"/>
    <property type="molecule type" value="Genomic_DNA"/>
</dbReference>
<dbReference type="RefSeq" id="WP_005496187.1">
    <property type="nucleotide sequence ID" value="NC_010506.1"/>
</dbReference>
<dbReference type="SMR" id="B1KQE6"/>
<dbReference type="STRING" id="392500.Swoo_0504"/>
<dbReference type="KEGG" id="swd:Swoo_0504"/>
<dbReference type="eggNOG" id="COG2901">
    <property type="taxonomic scope" value="Bacteria"/>
</dbReference>
<dbReference type="HOGENOM" id="CLU_158040_3_3_6"/>
<dbReference type="Proteomes" id="UP000002168">
    <property type="component" value="Chromosome"/>
</dbReference>
<dbReference type="GO" id="GO:0003700">
    <property type="term" value="F:DNA-binding transcription factor activity"/>
    <property type="evidence" value="ECO:0007669"/>
    <property type="project" value="UniProtKB-UniRule"/>
</dbReference>
<dbReference type="GO" id="GO:0043565">
    <property type="term" value="F:sequence-specific DNA binding"/>
    <property type="evidence" value="ECO:0007669"/>
    <property type="project" value="InterPro"/>
</dbReference>
<dbReference type="FunFam" id="1.10.10.60:FF:000006">
    <property type="entry name" value="DNA-binding protein Fis"/>
    <property type="match status" value="1"/>
</dbReference>
<dbReference type="Gene3D" id="1.10.10.60">
    <property type="entry name" value="Homeodomain-like"/>
    <property type="match status" value="1"/>
</dbReference>
<dbReference type="HAMAP" id="MF_00166">
    <property type="entry name" value="DNA_binding_Fis"/>
    <property type="match status" value="1"/>
</dbReference>
<dbReference type="InterPro" id="IPR005412">
    <property type="entry name" value="Fis_DNA-bd"/>
</dbReference>
<dbReference type="InterPro" id="IPR009057">
    <property type="entry name" value="Homeodomain-like_sf"/>
</dbReference>
<dbReference type="InterPro" id="IPR002197">
    <property type="entry name" value="HTH_Fis"/>
</dbReference>
<dbReference type="InterPro" id="IPR050207">
    <property type="entry name" value="Trans_regulatory_Fis"/>
</dbReference>
<dbReference type="NCBIfam" id="NF001659">
    <property type="entry name" value="PRK00430.1"/>
    <property type="match status" value="1"/>
</dbReference>
<dbReference type="PANTHER" id="PTHR47918">
    <property type="entry name" value="DNA-BINDING PROTEIN FIS"/>
    <property type="match status" value="1"/>
</dbReference>
<dbReference type="PANTHER" id="PTHR47918:SF1">
    <property type="entry name" value="DNA-BINDING PROTEIN FIS"/>
    <property type="match status" value="1"/>
</dbReference>
<dbReference type="Pfam" id="PF02954">
    <property type="entry name" value="HTH_8"/>
    <property type="match status" value="1"/>
</dbReference>
<dbReference type="PIRSF" id="PIRSF002097">
    <property type="entry name" value="DNA-binding_Fis"/>
    <property type="match status" value="1"/>
</dbReference>
<dbReference type="PRINTS" id="PR01591">
    <property type="entry name" value="DNABINDNGFIS"/>
</dbReference>
<dbReference type="PRINTS" id="PR01590">
    <property type="entry name" value="HTHFIS"/>
</dbReference>
<dbReference type="SUPFAM" id="SSF46689">
    <property type="entry name" value="Homeodomain-like"/>
    <property type="match status" value="1"/>
</dbReference>
<keyword id="KW-0010">Activator</keyword>
<keyword id="KW-0238">DNA-binding</keyword>
<keyword id="KW-1185">Reference proteome</keyword>
<keyword id="KW-0804">Transcription</keyword>
<keyword id="KW-0805">Transcription regulation</keyword>
<organism>
    <name type="scientific">Shewanella woodyi (strain ATCC 51908 / MS32)</name>
    <dbReference type="NCBI Taxonomy" id="392500"/>
    <lineage>
        <taxon>Bacteria</taxon>
        <taxon>Pseudomonadati</taxon>
        <taxon>Pseudomonadota</taxon>
        <taxon>Gammaproteobacteria</taxon>
        <taxon>Alteromonadales</taxon>
        <taxon>Shewanellaceae</taxon>
        <taxon>Shewanella</taxon>
    </lineage>
</organism>
<protein>
    <recommendedName>
        <fullName evidence="1">DNA-binding protein Fis</fullName>
    </recommendedName>
</protein>
<proteinExistence type="inferred from homology"/>
<sequence>MFDQTTNTETHQLTVGKIETANGTIKPQLLRDAVKRAVTNFFAQMDGQEAEEVYEMVLSEVEAPLLDIIMQHTRGNQTRAANMLGINRGTLRKKLKKYGMN</sequence>
<name>FIS_SHEWM</name>
<comment type="function">
    <text evidence="1">Activates ribosomal RNA transcription. Plays a direct role in upstream activation of rRNA promoters.</text>
</comment>
<comment type="subunit">
    <text evidence="1">Homodimer.</text>
</comment>
<comment type="similarity">
    <text evidence="1">Belongs to the transcriptional regulatory Fis family.</text>
</comment>
<reference key="1">
    <citation type="submission" date="2008-02" db="EMBL/GenBank/DDBJ databases">
        <title>Complete sequence of Shewanella woodyi ATCC 51908.</title>
        <authorList>
            <consortium name="US DOE Joint Genome Institute"/>
            <person name="Copeland A."/>
            <person name="Lucas S."/>
            <person name="Lapidus A."/>
            <person name="Glavina del Rio T."/>
            <person name="Dalin E."/>
            <person name="Tice H."/>
            <person name="Bruce D."/>
            <person name="Goodwin L."/>
            <person name="Pitluck S."/>
            <person name="Sims D."/>
            <person name="Brettin T."/>
            <person name="Detter J.C."/>
            <person name="Han C."/>
            <person name="Kuske C.R."/>
            <person name="Schmutz J."/>
            <person name="Larimer F."/>
            <person name="Land M."/>
            <person name="Hauser L."/>
            <person name="Kyrpides N."/>
            <person name="Lykidis A."/>
            <person name="Zhao J.-S."/>
            <person name="Richardson P."/>
        </authorList>
    </citation>
    <scope>NUCLEOTIDE SEQUENCE [LARGE SCALE GENOMIC DNA]</scope>
    <source>
        <strain>ATCC 51908 / MS32</strain>
    </source>
</reference>
<gene>
    <name evidence="1" type="primary">fis</name>
    <name type="ordered locus">Swoo_0504</name>
</gene>